<proteinExistence type="inferred from homology"/>
<name>CH601_ECOK1</name>
<keyword id="KW-0067">ATP-binding</keyword>
<keyword id="KW-0143">Chaperone</keyword>
<keyword id="KW-0963">Cytoplasm</keyword>
<keyword id="KW-0413">Isomerase</keyword>
<keyword id="KW-0547">Nucleotide-binding</keyword>
<keyword id="KW-1185">Reference proteome</keyword>
<dbReference type="EC" id="5.6.1.7" evidence="1"/>
<dbReference type="EMBL" id="CP000468">
    <property type="protein sequence ID" value="ABJ03691.1"/>
    <property type="molecule type" value="Genomic_DNA"/>
</dbReference>
<dbReference type="BMRB" id="A1AJ51"/>
<dbReference type="SMR" id="A1AJ51"/>
<dbReference type="KEGG" id="ecv:APECO1_2246"/>
<dbReference type="HOGENOM" id="CLU_016503_3_0_6"/>
<dbReference type="Proteomes" id="UP000008216">
    <property type="component" value="Chromosome"/>
</dbReference>
<dbReference type="GO" id="GO:0005737">
    <property type="term" value="C:cytoplasm"/>
    <property type="evidence" value="ECO:0007669"/>
    <property type="project" value="UniProtKB-SubCell"/>
</dbReference>
<dbReference type="GO" id="GO:0005524">
    <property type="term" value="F:ATP binding"/>
    <property type="evidence" value="ECO:0007669"/>
    <property type="project" value="UniProtKB-UniRule"/>
</dbReference>
<dbReference type="GO" id="GO:0140662">
    <property type="term" value="F:ATP-dependent protein folding chaperone"/>
    <property type="evidence" value="ECO:0007669"/>
    <property type="project" value="InterPro"/>
</dbReference>
<dbReference type="GO" id="GO:0016853">
    <property type="term" value="F:isomerase activity"/>
    <property type="evidence" value="ECO:0007669"/>
    <property type="project" value="UniProtKB-KW"/>
</dbReference>
<dbReference type="GO" id="GO:0051082">
    <property type="term" value="F:unfolded protein binding"/>
    <property type="evidence" value="ECO:0007669"/>
    <property type="project" value="UniProtKB-UniRule"/>
</dbReference>
<dbReference type="GO" id="GO:0042026">
    <property type="term" value="P:protein refolding"/>
    <property type="evidence" value="ECO:0007669"/>
    <property type="project" value="UniProtKB-UniRule"/>
</dbReference>
<dbReference type="CDD" id="cd03344">
    <property type="entry name" value="GroEL"/>
    <property type="match status" value="1"/>
</dbReference>
<dbReference type="FunFam" id="1.10.560.10:FF:000001">
    <property type="entry name" value="60 kDa chaperonin"/>
    <property type="match status" value="1"/>
</dbReference>
<dbReference type="FunFam" id="3.50.7.10:FF:000001">
    <property type="entry name" value="60 kDa chaperonin"/>
    <property type="match status" value="1"/>
</dbReference>
<dbReference type="Gene3D" id="3.50.7.10">
    <property type="entry name" value="GroEL"/>
    <property type="match status" value="1"/>
</dbReference>
<dbReference type="Gene3D" id="1.10.560.10">
    <property type="entry name" value="GroEL-like equatorial domain"/>
    <property type="match status" value="1"/>
</dbReference>
<dbReference type="Gene3D" id="3.30.260.10">
    <property type="entry name" value="TCP-1-like chaperonin intermediate domain"/>
    <property type="match status" value="1"/>
</dbReference>
<dbReference type="HAMAP" id="MF_00600">
    <property type="entry name" value="CH60"/>
    <property type="match status" value="1"/>
</dbReference>
<dbReference type="InterPro" id="IPR018370">
    <property type="entry name" value="Chaperonin_Cpn60_CS"/>
</dbReference>
<dbReference type="InterPro" id="IPR001844">
    <property type="entry name" value="Cpn60/GroEL"/>
</dbReference>
<dbReference type="InterPro" id="IPR002423">
    <property type="entry name" value="Cpn60/GroEL/TCP-1"/>
</dbReference>
<dbReference type="InterPro" id="IPR027409">
    <property type="entry name" value="GroEL-like_apical_dom_sf"/>
</dbReference>
<dbReference type="InterPro" id="IPR027413">
    <property type="entry name" value="GROEL-like_equatorial_sf"/>
</dbReference>
<dbReference type="InterPro" id="IPR027410">
    <property type="entry name" value="TCP-1-like_intermed_sf"/>
</dbReference>
<dbReference type="NCBIfam" id="TIGR02348">
    <property type="entry name" value="GroEL"/>
    <property type="match status" value="1"/>
</dbReference>
<dbReference type="NCBIfam" id="NF000592">
    <property type="entry name" value="PRK00013.1"/>
    <property type="match status" value="1"/>
</dbReference>
<dbReference type="NCBIfam" id="NF009487">
    <property type="entry name" value="PRK12849.1"/>
    <property type="match status" value="1"/>
</dbReference>
<dbReference type="NCBIfam" id="NF009488">
    <property type="entry name" value="PRK12850.1"/>
    <property type="match status" value="1"/>
</dbReference>
<dbReference type="NCBIfam" id="NF009489">
    <property type="entry name" value="PRK12851.1"/>
    <property type="match status" value="1"/>
</dbReference>
<dbReference type="PANTHER" id="PTHR45633">
    <property type="entry name" value="60 KDA HEAT SHOCK PROTEIN, MITOCHONDRIAL"/>
    <property type="match status" value="1"/>
</dbReference>
<dbReference type="Pfam" id="PF00118">
    <property type="entry name" value="Cpn60_TCP1"/>
    <property type="match status" value="1"/>
</dbReference>
<dbReference type="PRINTS" id="PR00298">
    <property type="entry name" value="CHAPERONIN60"/>
</dbReference>
<dbReference type="SUPFAM" id="SSF52029">
    <property type="entry name" value="GroEL apical domain-like"/>
    <property type="match status" value="1"/>
</dbReference>
<dbReference type="SUPFAM" id="SSF48592">
    <property type="entry name" value="GroEL equatorial domain-like"/>
    <property type="match status" value="1"/>
</dbReference>
<dbReference type="SUPFAM" id="SSF54849">
    <property type="entry name" value="GroEL-intermediate domain like"/>
    <property type="match status" value="1"/>
</dbReference>
<dbReference type="PROSITE" id="PS00296">
    <property type="entry name" value="CHAPERONINS_CPN60"/>
    <property type="match status" value="1"/>
</dbReference>
<comment type="function">
    <text evidence="1">Together with its co-chaperonin GroES, plays an essential role in assisting protein folding. The GroEL-GroES system forms a nano-cage that allows encapsulation of the non-native substrate proteins and provides a physical environment optimized to promote and accelerate protein folding.</text>
</comment>
<comment type="catalytic activity">
    <reaction evidence="1">
        <text>ATP + H2O + a folded polypeptide = ADP + phosphate + an unfolded polypeptide.</text>
        <dbReference type="EC" id="5.6.1.7"/>
    </reaction>
</comment>
<comment type="subunit">
    <text evidence="1">Forms a cylinder of 14 subunits composed of two heptameric rings stacked back-to-back. Interacts with the co-chaperonin GroES.</text>
</comment>
<comment type="subcellular location">
    <subcellularLocation>
        <location evidence="1">Cytoplasm</location>
    </subcellularLocation>
</comment>
<comment type="similarity">
    <text evidence="1">Belongs to the chaperonin (HSP60) family.</text>
</comment>
<sequence>MAAKDVKFGNDARVKMLRGVNVLADAVKVTLGPKGRNVVLDKSFGAPTITKDGVSVAREIELEDKFENMGAQMVKEVASKANDAAGDGTTTATVLAQAIITEGLKAVAAGMNPMDLKRGIDKAVTAAVEELKALSVPCSDSKAIAQVGTISANSDETVGKLIAEAMDKVGKEGVITVEDGTGLQDELDVVEGMQFDRGYLSPYFINKPETGAVELESPFILLADKKISNIREMLPVLEAVAKAGKPLLIIAEDVEGEALATLVVNTMRGIVKVAAVKAPGFGDRRKAMLQDIATLTGGTVISEEIGMELEKATLEDLGQAKRVVINKDTTTIIDGVGEEAAIQGRVAQIRQQIEEATSDYDREKLQERVAKLAGGVAVIKVGAATEVEMKEKKARVEDALHATRAAVEEGVVAGGGVALIRVASKLADLRGQNEDQNVGIKVALRAMEAPLRQIVLNCGEEPSVVANTVKGGDGNYGYNAATEEYGNMIDMGILDPTKVTRSALQYAASVAGLMITTECMVTDLPKNDAADLGAAGGMGGMGGMGGMM</sequence>
<reference key="1">
    <citation type="journal article" date="2007" name="J. Bacteriol.">
        <title>The genome sequence of avian pathogenic Escherichia coli strain O1:K1:H7 shares strong similarities with human extraintestinal pathogenic E. coli genomes.</title>
        <authorList>
            <person name="Johnson T.J."/>
            <person name="Kariyawasam S."/>
            <person name="Wannemuehler Y."/>
            <person name="Mangiamele P."/>
            <person name="Johnson S.J."/>
            <person name="Doetkott C."/>
            <person name="Skyberg J.A."/>
            <person name="Lynne A.M."/>
            <person name="Johnson J.R."/>
            <person name="Nolan L.K."/>
        </authorList>
    </citation>
    <scope>NUCLEOTIDE SEQUENCE [LARGE SCALE GENOMIC DNA]</scope>
</reference>
<organism>
    <name type="scientific">Escherichia coli O1:K1 / APEC</name>
    <dbReference type="NCBI Taxonomy" id="405955"/>
    <lineage>
        <taxon>Bacteria</taxon>
        <taxon>Pseudomonadati</taxon>
        <taxon>Pseudomonadota</taxon>
        <taxon>Gammaproteobacteria</taxon>
        <taxon>Enterobacterales</taxon>
        <taxon>Enterobacteriaceae</taxon>
        <taxon>Escherichia</taxon>
    </lineage>
</organism>
<accession>A1AJ51</accession>
<protein>
    <recommendedName>
        <fullName evidence="1">Chaperonin GroEL 1</fullName>
        <ecNumber evidence="1">5.6.1.7</ecNumber>
    </recommendedName>
    <alternativeName>
        <fullName evidence="1">60 kDa chaperonin 1</fullName>
    </alternativeName>
    <alternativeName>
        <fullName evidence="1">Chaperonin-60 1</fullName>
        <shortName evidence="1">Cpn60 1</shortName>
    </alternativeName>
</protein>
<evidence type="ECO:0000255" key="1">
    <source>
        <dbReference type="HAMAP-Rule" id="MF_00600"/>
    </source>
</evidence>
<gene>
    <name evidence="1" type="primary">groEL1</name>
    <name evidence="1" type="synonym">groL1</name>
    <name type="ordered locus">Ecok1_41970</name>
    <name type="ORF">APECO1_2246</name>
</gene>
<feature type="chain" id="PRO_0000331999" description="Chaperonin GroEL 1">
    <location>
        <begin position="1"/>
        <end position="548"/>
    </location>
</feature>
<feature type="binding site" evidence="1">
    <location>
        <begin position="30"/>
        <end position="33"/>
    </location>
    <ligand>
        <name>ATP</name>
        <dbReference type="ChEBI" id="CHEBI:30616"/>
    </ligand>
</feature>
<feature type="binding site" evidence="1">
    <location>
        <position position="51"/>
    </location>
    <ligand>
        <name>ATP</name>
        <dbReference type="ChEBI" id="CHEBI:30616"/>
    </ligand>
</feature>
<feature type="binding site" evidence="1">
    <location>
        <begin position="87"/>
        <end position="91"/>
    </location>
    <ligand>
        <name>ATP</name>
        <dbReference type="ChEBI" id="CHEBI:30616"/>
    </ligand>
</feature>
<feature type="binding site" evidence="1">
    <location>
        <position position="415"/>
    </location>
    <ligand>
        <name>ATP</name>
        <dbReference type="ChEBI" id="CHEBI:30616"/>
    </ligand>
</feature>
<feature type="binding site" evidence="1">
    <location>
        <begin position="479"/>
        <end position="481"/>
    </location>
    <ligand>
        <name>ATP</name>
        <dbReference type="ChEBI" id="CHEBI:30616"/>
    </ligand>
</feature>
<feature type="binding site" evidence="1">
    <location>
        <position position="495"/>
    </location>
    <ligand>
        <name>ATP</name>
        <dbReference type="ChEBI" id="CHEBI:30616"/>
    </ligand>
</feature>